<reference key="1">
    <citation type="submission" date="2001-06" db="EMBL/GenBank/DDBJ databases">
        <authorList>
            <person name="Jinn C.L."/>
            <person name="Luo C.-W."/>
            <person name="Ou C.-M."/>
            <person name="Chen Y.-H."/>
        </authorList>
    </citation>
    <scope>NUCLEOTIDE SEQUENCE [GENOMIC DNA / MRNA] (ISOFORM 1)</scope>
    <source>
        <strain>ICR</strain>
        <tissue>Testis</tissue>
    </source>
</reference>
<reference key="2">
    <citation type="journal article" date="2005" name="Science">
        <title>The transcriptional landscape of the mammalian genome.</title>
        <authorList>
            <person name="Carninci P."/>
            <person name="Kasukawa T."/>
            <person name="Katayama S."/>
            <person name="Gough J."/>
            <person name="Frith M.C."/>
            <person name="Maeda N."/>
            <person name="Oyama R."/>
            <person name="Ravasi T."/>
            <person name="Lenhard B."/>
            <person name="Wells C."/>
            <person name="Kodzius R."/>
            <person name="Shimokawa K."/>
            <person name="Bajic V.B."/>
            <person name="Brenner S.E."/>
            <person name="Batalov S."/>
            <person name="Forrest A.R."/>
            <person name="Zavolan M."/>
            <person name="Davis M.J."/>
            <person name="Wilming L.G."/>
            <person name="Aidinis V."/>
            <person name="Allen J.E."/>
            <person name="Ambesi-Impiombato A."/>
            <person name="Apweiler R."/>
            <person name="Aturaliya R.N."/>
            <person name="Bailey T.L."/>
            <person name="Bansal M."/>
            <person name="Baxter L."/>
            <person name="Beisel K.W."/>
            <person name="Bersano T."/>
            <person name="Bono H."/>
            <person name="Chalk A.M."/>
            <person name="Chiu K.P."/>
            <person name="Choudhary V."/>
            <person name="Christoffels A."/>
            <person name="Clutterbuck D.R."/>
            <person name="Crowe M.L."/>
            <person name="Dalla E."/>
            <person name="Dalrymple B.P."/>
            <person name="de Bono B."/>
            <person name="Della Gatta G."/>
            <person name="di Bernardo D."/>
            <person name="Down T."/>
            <person name="Engstrom P."/>
            <person name="Fagiolini M."/>
            <person name="Faulkner G."/>
            <person name="Fletcher C.F."/>
            <person name="Fukushima T."/>
            <person name="Furuno M."/>
            <person name="Futaki S."/>
            <person name="Gariboldi M."/>
            <person name="Georgii-Hemming P."/>
            <person name="Gingeras T.R."/>
            <person name="Gojobori T."/>
            <person name="Green R.E."/>
            <person name="Gustincich S."/>
            <person name="Harbers M."/>
            <person name="Hayashi Y."/>
            <person name="Hensch T.K."/>
            <person name="Hirokawa N."/>
            <person name="Hill D."/>
            <person name="Huminiecki L."/>
            <person name="Iacono M."/>
            <person name="Ikeo K."/>
            <person name="Iwama A."/>
            <person name="Ishikawa T."/>
            <person name="Jakt M."/>
            <person name="Kanapin A."/>
            <person name="Katoh M."/>
            <person name="Kawasawa Y."/>
            <person name="Kelso J."/>
            <person name="Kitamura H."/>
            <person name="Kitano H."/>
            <person name="Kollias G."/>
            <person name="Krishnan S.P."/>
            <person name="Kruger A."/>
            <person name="Kummerfeld S.K."/>
            <person name="Kurochkin I.V."/>
            <person name="Lareau L.F."/>
            <person name="Lazarevic D."/>
            <person name="Lipovich L."/>
            <person name="Liu J."/>
            <person name="Liuni S."/>
            <person name="McWilliam S."/>
            <person name="Madan Babu M."/>
            <person name="Madera M."/>
            <person name="Marchionni L."/>
            <person name="Matsuda H."/>
            <person name="Matsuzawa S."/>
            <person name="Miki H."/>
            <person name="Mignone F."/>
            <person name="Miyake S."/>
            <person name="Morris K."/>
            <person name="Mottagui-Tabar S."/>
            <person name="Mulder N."/>
            <person name="Nakano N."/>
            <person name="Nakauchi H."/>
            <person name="Ng P."/>
            <person name="Nilsson R."/>
            <person name="Nishiguchi S."/>
            <person name="Nishikawa S."/>
            <person name="Nori F."/>
            <person name="Ohara O."/>
            <person name="Okazaki Y."/>
            <person name="Orlando V."/>
            <person name="Pang K.C."/>
            <person name="Pavan W.J."/>
            <person name="Pavesi G."/>
            <person name="Pesole G."/>
            <person name="Petrovsky N."/>
            <person name="Piazza S."/>
            <person name="Reed J."/>
            <person name="Reid J.F."/>
            <person name="Ring B.Z."/>
            <person name="Ringwald M."/>
            <person name="Rost B."/>
            <person name="Ruan Y."/>
            <person name="Salzberg S.L."/>
            <person name="Sandelin A."/>
            <person name="Schneider C."/>
            <person name="Schoenbach C."/>
            <person name="Sekiguchi K."/>
            <person name="Semple C.A."/>
            <person name="Seno S."/>
            <person name="Sessa L."/>
            <person name="Sheng Y."/>
            <person name="Shibata Y."/>
            <person name="Shimada H."/>
            <person name="Shimada K."/>
            <person name="Silva D."/>
            <person name="Sinclair B."/>
            <person name="Sperling S."/>
            <person name="Stupka E."/>
            <person name="Sugiura K."/>
            <person name="Sultana R."/>
            <person name="Takenaka Y."/>
            <person name="Taki K."/>
            <person name="Tammoja K."/>
            <person name="Tan S.L."/>
            <person name="Tang S."/>
            <person name="Taylor M.S."/>
            <person name="Tegner J."/>
            <person name="Teichmann S.A."/>
            <person name="Ueda H.R."/>
            <person name="van Nimwegen E."/>
            <person name="Verardo R."/>
            <person name="Wei C.L."/>
            <person name="Yagi K."/>
            <person name="Yamanishi H."/>
            <person name="Zabarovsky E."/>
            <person name="Zhu S."/>
            <person name="Zimmer A."/>
            <person name="Hide W."/>
            <person name="Bult C."/>
            <person name="Grimmond S.M."/>
            <person name="Teasdale R.D."/>
            <person name="Liu E.T."/>
            <person name="Brusic V."/>
            <person name="Quackenbush J."/>
            <person name="Wahlestedt C."/>
            <person name="Mattick J.S."/>
            <person name="Hume D.A."/>
            <person name="Kai C."/>
            <person name="Sasaki D."/>
            <person name="Tomaru Y."/>
            <person name="Fukuda S."/>
            <person name="Kanamori-Katayama M."/>
            <person name="Suzuki M."/>
            <person name="Aoki J."/>
            <person name="Arakawa T."/>
            <person name="Iida J."/>
            <person name="Imamura K."/>
            <person name="Itoh M."/>
            <person name="Kato T."/>
            <person name="Kawaji H."/>
            <person name="Kawagashira N."/>
            <person name="Kawashima T."/>
            <person name="Kojima M."/>
            <person name="Kondo S."/>
            <person name="Konno H."/>
            <person name="Nakano K."/>
            <person name="Ninomiya N."/>
            <person name="Nishio T."/>
            <person name="Okada M."/>
            <person name="Plessy C."/>
            <person name="Shibata K."/>
            <person name="Shiraki T."/>
            <person name="Suzuki S."/>
            <person name="Tagami M."/>
            <person name="Waki K."/>
            <person name="Watahiki A."/>
            <person name="Okamura-Oho Y."/>
            <person name="Suzuki H."/>
            <person name="Kawai J."/>
            <person name="Hayashizaki Y."/>
        </authorList>
    </citation>
    <scope>NUCLEOTIDE SEQUENCE [LARGE SCALE MRNA] (ISOFORM 1)</scope>
    <source>
        <strain>C57BL/6J</strain>
        <tissue>Testis</tissue>
    </source>
</reference>
<reference key="3">
    <citation type="journal article" date="2004" name="Genome Res.">
        <title>The status, quality, and expansion of the NIH full-length cDNA project: the Mammalian Gene Collection (MGC).</title>
        <authorList>
            <consortium name="The MGC Project Team"/>
        </authorList>
    </citation>
    <scope>NUCLEOTIDE SEQUENCE [LARGE SCALE MRNA] (ISOFORM 2)</scope>
</reference>
<accession>Q8K4I7</accession>
<accession>Q3KNK7</accession>
<accession>Q8K4D1</accession>
<dbReference type="EMBL" id="AF392062">
    <property type="protein sequence ID" value="AAM97837.1"/>
    <property type="molecule type" value="mRNA"/>
</dbReference>
<dbReference type="EMBL" id="AF453931">
    <property type="protein sequence ID" value="AAM97842.1"/>
    <property type="molecule type" value="Genomic_DNA"/>
</dbReference>
<dbReference type="EMBL" id="AK077121">
    <property type="protein sequence ID" value="BAC36624.1"/>
    <property type="molecule type" value="mRNA"/>
</dbReference>
<dbReference type="EMBL" id="BC107230">
    <property type="protein sequence ID" value="AAI07231.1"/>
    <property type="molecule type" value="mRNA"/>
</dbReference>
<dbReference type="EMBL" id="BC107231">
    <property type="protein sequence ID" value="AAI07232.1"/>
    <property type="molecule type" value="mRNA"/>
</dbReference>
<dbReference type="CCDS" id="CCDS23575.1">
    <molecule id="Q8K4I7-1"/>
</dbReference>
<dbReference type="RefSeq" id="NP_694812.1">
    <molecule id="Q8K4I7-1"/>
    <property type="nucleotide sequence ID" value="NM_153172.1"/>
</dbReference>
<dbReference type="SMR" id="Q8K4I7"/>
<dbReference type="FunCoup" id="Q8K4I7">
    <property type="interactions" value="235"/>
</dbReference>
<dbReference type="STRING" id="10090.ENSMUSP00000011391"/>
<dbReference type="MEROPS" id="S01.968"/>
<dbReference type="GlyCosmos" id="Q8K4I7">
    <property type="glycosylation" value="3 sites, No reported glycans"/>
</dbReference>
<dbReference type="GlyGen" id="Q8K4I7">
    <property type="glycosylation" value="3 sites"/>
</dbReference>
<dbReference type="SwissPalm" id="Q8K4I7"/>
<dbReference type="PaxDb" id="10090-ENSMUSP00000011391"/>
<dbReference type="ProteomicsDB" id="291750">
    <molecule id="Q8K4I7-1"/>
</dbReference>
<dbReference type="ProteomicsDB" id="291751">
    <molecule id="Q8K4I7-2"/>
</dbReference>
<dbReference type="Antibodypedia" id="53159">
    <property type="antibodies" value="18 antibodies from 9 providers"/>
</dbReference>
<dbReference type="DNASU" id="260408"/>
<dbReference type="Ensembl" id="ENSMUST00000011391.12">
    <molecule id="Q8K4I7-1"/>
    <property type="protein sequence ID" value="ENSMUSP00000011391.8"/>
    <property type="gene ID" value="ENSMUSG00000047257.14"/>
</dbReference>
<dbReference type="Ensembl" id="ENSMUST00000146794.4">
    <molecule id="Q8K4I7-2"/>
    <property type="protein sequence ID" value="ENSMUSP00000120471.2"/>
    <property type="gene ID" value="ENSMUSG00000047257.14"/>
</dbReference>
<dbReference type="GeneID" id="260408"/>
<dbReference type="KEGG" id="mmu:260408"/>
<dbReference type="UCSC" id="uc009ruw.1">
    <molecule id="Q8K4I7-1"/>
    <property type="organism name" value="mouse"/>
</dbReference>
<dbReference type="UCSC" id="uc009rux.1">
    <molecule id="Q8K4I7-2"/>
    <property type="organism name" value="mouse"/>
</dbReference>
<dbReference type="AGR" id="MGI:3605764"/>
<dbReference type="CTD" id="260408"/>
<dbReference type="MGI" id="MGI:3605764">
    <property type="gene designation" value="Prss45"/>
</dbReference>
<dbReference type="VEuPathDB" id="HostDB:ENSMUSG00000047257"/>
<dbReference type="eggNOG" id="KOG3627">
    <property type="taxonomic scope" value="Eukaryota"/>
</dbReference>
<dbReference type="GeneTree" id="ENSGT00940000161932"/>
<dbReference type="HOGENOM" id="CLU_006842_0_4_1"/>
<dbReference type="InParanoid" id="Q8K4I7"/>
<dbReference type="OMA" id="GNMICAT"/>
<dbReference type="OrthoDB" id="546450at2759"/>
<dbReference type="PhylomeDB" id="Q8K4I7"/>
<dbReference type="TreeFam" id="TF351676"/>
<dbReference type="BioGRID-ORCS" id="260408">
    <property type="hits" value="2 hits in 77 CRISPR screens"/>
</dbReference>
<dbReference type="PRO" id="PR:Q8K4I7"/>
<dbReference type="Proteomes" id="UP000000589">
    <property type="component" value="Chromosome 9"/>
</dbReference>
<dbReference type="RNAct" id="Q8K4I7">
    <property type="molecule type" value="protein"/>
</dbReference>
<dbReference type="Bgee" id="ENSMUSG00000047257">
    <property type="expression patterns" value="Expressed in spermatocyte and 6 other cell types or tissues"/>
</dbReference>
<dbReference type="GO" id="GO:0005576">
    <property type="term" value="C:extracellular region"/>
    <property type="evidence" value="ECO:0007669"/>
    <property type="project" value="UniProtKB-SubCell"/>
</dbReference>
<dbReference type="GO" id="GO:0004252">
    <property type="term" value="F:serine-type endopeptidase activity"/>
    <property type="evidence" value="ECO:0007669"/>
    <property type="project" value="InterPro"/>
</dbReference>
<dbReference type="GO" id="GO:0006508">
    <property type="term" value="P:proteolysis"/>
    <property type="evidence" value="ECO:0007669"/>
    <property type="project" value="InterPro"/>
</dbReference>
<dbReference type="CDD" id="cd00190">
    <property type="entry name" value="Tryp_SPc"/>
    <property type="match status" value="1"/>
</dbReference>
<dbReference type="FunFam" id="2.40.10.10:FF:000122">
    <property type="entry name" value="Chymotrypsin-like elastase family member 1"/>
    <property type="match status" value="1"/>
</dbReference>
<dbReference type="FunFam" id="2.40.10.10:FF:000105">
    <property type="entry name" value="Inactive serine protease 45"/>
    <property type="match status" value="1"/>
</dbReference>
<dbReference type="Gene3D" id="2.40.10.10">
    <property type="entry name" value="Trypsin-like serine proteases"/>
    <property type="match status" value="2"/>
</dbReference>
<dbReference type="InterPro" id="IPR009003">
    <property type="entry name" value="Peptidase_S1_PA"/>
</dbReference>
<dbReference type="InterPro" id="IPR043504">
    <property type="entry name" value="Peptidase_S1_PA_chymotrypsin"/>
</dbReference>
<dbReference type="InterPro" id="IPR001314">
    <property type="entry name" value="Peptidase_S1A"/>
</dbReference>
<dbReference type="InterPro" id="IPR051487">
    <property type="entry name" value="Ser/Thr_Proteases_Immune/Dev"/>
</dbReference>
<dbReference type="InterPro" id="IPR001254">
    <property type="entry name" value="Trypsin_dom"/>
</dbReference>
<dbReference type="InterPro" id="IPR018114">
    <property type="entry name" value="TRYPSIN_HIS"/>
</dbReference>
<dbReference type="PANTHER" id="PTHR24256">
    <property type="entry name" value="TRYPTASE-RELATED"/>
    <property type="match status" value="1"/>
</dbReference>
<dbReference type="Pfam" id="PF00089">
    <property type="entry name" value="Trypsin"/>
    <property type="match status" value="1"/>
</dbReference>
<dbReference type="PRINTS" id="PR00722">
    <property type="entry name" value="CHYMOTRYPSIN"/>
</dbReference>
<dbReference type="SMART" id="SM00020">
    <property type="entry name" value="Tryp_SPc"/>
    <property type="match status" value="1"/>
</dbReference>
<dbReference type="SUPFAM" id="SSF50494">
    <property type="entry name" value="Trypsin-like serine proteases"/>
    <property type="match status" value="1"/>
</dbReference>
<dbReference type="PROSITE" id="PS50240">
    <property type="entry name" value="TRYPSIN_DOM"/>
    <property type="match status" value="1"/>
</dbReference>
<dbReference type="PROSITE" id="PS00134">
    <property type="entry name" value="TRYPSIN_HIS"/>
    <property type="match status" value="1"/>
</dbReference>
<name>PRS45_MOUSE</name>
<proteinExistence type="evidence at transcript level"/>
<feature type="signal peptide" evidence="1">
    <location>
        <begin position="1"/>
        <end position="35"/>
    </location>
</feature>
<feature type="chain" id="PRO_0000349308" description="Inactive serine protease 45">
    <location>
        <begin position="36"/>
        <end position="317"/>
    </location>
</feature>
<feature type="domain" description="Peptidase S1" evidence="2">
    <location>
        <begin position="44"/>
        <end position="291"/>
    </location>
</feature>
<feature type="glycosylation site" description="N-linked (GlcNAc...) asparagine" evidence="1">
    <location>
        <position position="40"/>
    </location>
</feature>
<feature type="glycosylation site" description="N-linked (GlcNAc...) asparagine" evidence="1">
    <location>
        <position position="110"/>
    </location>
</feature>
<feature type="glycosylation site" description="N-linked (GlcNAc...) asparagine" evidence="1">
    <location>
        <position position="272"/>
    </location>
</feature>
<feature type="disulfide bond" evidence="2">
    <location>
        <begin position="75"/>
        <end position="91"/>
    </location>
</feature>
<feature type="disulfide bond" evidence="2">
    <location>
        <begin position="172"/>
        <end position="249"/>
    </location>
</feature>
<feature type="disulfide bond" evidence="2">
    <location>
        <begin position="207"/>
        <end position="230"/>
    </location>
</feature>
<feature type="disulfide bond" evidence="2">
    <location>
        <begin position="239"/>
        <end position="267"/>
    </location>
</feature>
<feature type="splice variant" id="VSP_035356" description="In isoform 2." evidence="3">
    <location>
        <begin position="36"/>
        <end position="44"/>
    </location>
</feature>
<feature type="sequence conflict" description="In Ref. 1; AAM97842 and 3; AAI07232/AAI07231." evidence="4" ref="1 3">
    <original>V</original>
    <variation>I</variation>
    <location>
        <position position="168"/>
    </location>
</feature>
<comment type="subcellular location">
    <subcellularLocation>
        <location evidence="4">Secreted</location>
    </subcellularLocation>
</comment>
<comment type="alternative products">
    <event type="alternative splicing"/>
    <isoform>
        <id>Q8K4I7-1</id>
        <name>1</name>
        <sequence type="displayed"/>
    </isoform>
    <isoform>
        <id>Q8K4I7-2</id>
        <name>2</name>
        <sequence type="described" ref="VSP_035356"/>
    </isoform>
</comment>
<comment type="similarity">
    <text evidence="2">Belongs to the peptidase S1 family.</text>
</comment>
<comment type="caution">
    <text evidence="4">In contrast to other members of the family, lacks the conserved Ser at position 243 which is replaced by a Pro residue, suggesting it is inactive.</text>
</comment>
<evidence type="ECO:0000255" key="1"/>
<evidence type="ECO:0000255" key="2">
    <source>
        <dbReference type="PROSITE-ProRule" id="PRU00274"/>
    </source>
</evidence>
<evidence type="ECO:0000303" key="3">
    <source>
    </source>
</evidence>
<evidence type="ECO:0000305" key="4"/>
<evidence type="ECO:0000312" key="5">
    <source>
        <dbReference type="MGI" id="MGI:3605764"/>
    </source>
</evidence>
<protein>
    <recommendedName>
        <fullName evidence="4">Inactive serine protease 45</fullName>
    </recommendedName>
    <alternativeName>
        <fullName>Inactive testis serine protease 5</fullName>
    </alternativeName>
    <alternativeName>
        <fullName>Trypsin-like protease p98</fullName>
    </alternativeName>
</protein>
<gene>
    <name evidence="5" type="primary">Prss45</name>
    <name type="synonym">Tessp5</name>
</gene>
<organism>
    <name type="scientific">Mus musculus</name>
    <name type="common">Mouse</name>
    <dbReference type="NCBI Taxonomy" id="10090"/>
    <lineage>
        <taxon>Eukaryota</taxon>
        <taxon>Metazoa</taxon>
        <taxon>Chordata</taxon>
        <taxon>Craniata</taxon>
        <taxon>Vertebrata</taxon>
        <taxon>Euteleostomi</taxon>
        <taxon>Mammalia</taxon>
        <taxon>Eutheria</taxon>
        <taxon>Euarchontoglires</taxon>
        <taxon>Glires</taxon>
        <taxon>Rodentia</taxon>
        <taxon>Myomorpha</taxon>
        <taxon>Muroidea</taxon>
        <taxon>Muridae</taxon>
        <taxon>Murinae</taxon>
        <taxon>Mus</taxon>
        <taxon>Mus</taxon>
    </lineage>
</organism>
<sequence length="317" mass="35723">MATSLRGLDAGPGSLRRWILICFAALLLLPPRPNLGYNENYTEPVCGTPWWPDNLEESHHWPWEASLQIEDKHVCGGALIDRSWVVSAAHCIQGNKEYSVMLGSSTLHPNGSSWTLKIPVGDIIIHPKYWGRNFIRSDIALLCLETPVTFNKYVQPICLPEHNFNFKVGTKCWVTGWGQVKQHSSAQLTPAPELWEAEVFIIDNKNCDSIFHKKTLYPQVVPLIRKNMICTTNYGEDLCYGDPGGPLACEIDGRWILAGVFSWEKACATVPNLSVYTRITKYTIWIKDQVSHGAQLGPCRTSWLLLLPWLLQLPVSL</sequence>
<keyword id="KW-0025">Alternative splicing</keyword>
<keyword id="KW-1015">Disulfide bond</keyword>
<keyword id="KW-0325">Glycoprotein</keyword>
<keyword id="KW-1185">Reference proteome</keyword>
<keyword id="KW-0964">Secreted</keyword>
<keyword id="KW-0732">Signal</keyword>